<protein>
    <recommendedName>
        <fullName>G-rich sequence factor 1</fullName>
        <shortName>GRSF-1</shortName>
    </recommendedName>
</protein>
<sequence>MAGTRWVLGALLRGCGCNCSSCRRTGAACLPFYSAAGSIPSGVSGRRRLLLLLGAAAAAASQTRGLQTGPVPPGRLAGPPAVATSAAAAAAASYSALRASLLPQSLAAAAAVPTRSYSQESKTTYLEDLPPPPEYELAPSKLEEEVDDVFLIRAQGLPWSCTMEDVLNFFSDCRIRNGENGIHFLLNRDGKRRGDALIEMESEQDVQKALEKHRMYMGQRYVEVYEINNEDVDALMKSLQVKSSPVVNDGVVRLRGLPYSCNEKDIVDFFAGLNIVDITFVMDYRGRRKTGEAYVQFEEPEMANQALLKHREEIGNRYIEIFPSRRNEVRTHVGSYKGKKIASFPTAKYITEPEMVFEEHEVNEDIQPMTAFESEKEIELPKEVPEKLPEAADFGTTSSLHFVHMRGLPFQANAQDIINFFAPLKPVRITMEYSSSGKATGEADVHFETHEDAVAAMLKDRSHVHHRYIELFLNSCPKGK</sequence>
<comment type="function">
    <text evidence="4 5 7">Regulator of post-transcriptional mitochondrial gene expression, required for assembly of the mitochondrial ribosome and for recruitment of mRNA and lncRNA. Binds RNAs containing the 14 base G-rich element. Preferentially binds RNAs transcribed from three contiguous genes on the light strand of mtDNA, the ND6 mRNA, and the long non-coding RNAs for MT-CYB and MT-ND5, each of which contains multiple consensus binding sequences (PubMed:23473033, PubMed:23473034, PubMed:29967381). Involved in the degradosome-mediated decay of non-coding mitochondrial transcripts (MT-ncRNA) and tRNA-like molecules (PubMed:29967381). Acts by unwinding G-quadruplex RNA structures in MT-ncRNA, thus facilitating their degradation by the degradosome (PubMed:29967381). G-quadruplexes (G4) are non-canonical 4 stranded structures formed by transcripts from the light strand of mtDNA (PubMed:29967381).</text>
</comment>
<comment type="subunit">
    <text evidence="5 6 7">Monomer. Found in a complex with DDX28, DHX30, FASTKD2 and FASTKD5 (PubMed:25683715). Interacts with the mitochondrial RNase P complex subunit TRMT10C/MRPP1 (PubMed:23473034). Interacts with the 2 components of the mitochondrial degradosome complex, PNPT1 and SUPV3L1, in an RNA-dependent manner (PubMed:29967381).</text>
</comment>
<comment type="interaction">
    <interactant intactId="EBI-1054150">
        <id>Q12849</id>
    </interactant>
    <interactant intactId="EBI-752185">
        <id>O75832</id>
        <label>PSMD10</label>
    </interactant>
    <organismsDiffer>false</organismsDiffer>
    <experiments>4</experiments>
</comment>
<comment type="subcellular location">
    <molecule>Isoform 1</molecule>
    <subcellularLocation>
        <location evidence="4 5 6 7">Mitochondrion matrix</location>
    </subcellularLocation>
    <text evidence="4 5 6">Localizes to mitochondrial RNA granules found in close proximity to the mitochondrial nucleoids.</text>
</comment>
<comment type="subcellular location">
    <molecule>Isoform 2</molecule>
    <subcellularLocation>
        <location evidence="5">Cytoplasm</location>
    </subcellularLocation>
</comment>
<comment type="alternative products">
    <event type="alternative splicing"/>
    <isoform>
        <id>Q12849-1</id>
        <name>1</name>
        <sequence type="displayed"/>
    </isoform>
    <isoform>
        <id>Q12849-5</id>
        <name>2</name>
        <sequence type="described" ref="VSP_043118"/>
    </isoform>
</comment>
<comment type="domain">
    <text evidence="7">The RRM domains mediate RNA-binding.</text>
</comment>
<comment type="miscellaneous">
    <text>Depletion of GRSF1 by siRNA results in a combined OXPHOS assembly defect, with the prominent loss of complexes I, III, IV, and V. It also leads to altered steady-state levels of mitochondrial rRNAs and mRNAs.</text>
</comment>
<comment type="sequence caution" evidence="9">
    <conflict type="miscellaneous discrepancy">
        <sequence resource="EMBL-CDS" id="AAC95399"/>
    </conflict>
    <text>Unlikely isoform. Aberrant splice sites.</text>
</comment>
<comment type="sequence caution" evidence="9">
    <conflict type="miscellaneous discrepancy">
        <sequence resource="EMBL-CDS" id="AAH40485"/>
    </conflict>
    <text>Intron retention.</text>
</comment>
<comment type="sequence caution" evidence="9">
    <conflict type="erroneous gene model prediction">
        <sequence resource="EMBL-CDS" id="AAY40942"/>
    </conflict>
</comment>
<comment type="sequence caution" evidence="9">
    <conflict type="miscellaneous discrepancy">
        <sequence resource="EMBL-CDS" id="BAC03513"/>
    </conflict>
    <text>Unlikely isoform. Aberrant splice sites.</text>
</comment>
<comment type="sequence caution" evidence="9">
    <conflict type="miscellaneous discrepancy">
        <sequence resource="EMBL-CDS" id="BAC86863"/>
    </conflict>
    <text>Unlikely isoform. Aberrant splice sites.</text>
</comment>
<comment type="sequence caution" evidence="9">
    <conflict type="erroneous gene model prediction">
        <sequence resource="EMBL-CDS" id="EAX05634"/>
    </conflict>
</comment>
<gene>
    <name type="primary">GRSF1</name>
</gene>
<reference key="1">
    <citation type="journal article" date="1994" name="Nucleic Acids Res.">
        <title>GRSF-1: a poly(A)+ mRNA binding protein which interacts with a conserved G-rich element.</title>
        <authorList>
            <person name="Qian Z."/>
            <person name="Wilusz J."/>
        </authorList>
    </citation>
    <scope>NUCLEOTIDE SEQUENCE [MRNA] (ISOFORM 1)</scope>
</reference>
<reference key="2">
    <citation type="journal article" date="2004" name="Nat. Genet.">
        <title>Complete sequencing and characterization of 21,243 full-length human cDNAs.</title>
        <authorList>
            <person name="Ota T."/>
            <person name="Suzuki Y."/>
            <person name="Nishikawa T."/>
            <person name="Otsuki T."/>
            <person name="Sugiyama T."/>
            <person name="Irie R."/>
            <person name="Wakamatsu A."/>
            <person name="Hayashi K."/>
            <person name="Sato H."/>
            <person name="Nagai K."/>
            <person name="Kimura K."/>
            <person name="Makita H."/>
            <person name="Sekine M."/>
            <person name="Obayashi M."/>
            <person name="Nishi T."/>
            <person name="Shibahara T."/>
            <person name="Tanaka T."/>
            <person name="Ishii S."/>
            <person name="Yamamoto J."/>
            <person name="Saito K."/>
            <person name="Kawai Y."/>
            <person name="Isono Y."/>
            <person name="Nakamura Y."/>
            <person name="Nagahari K."/>
            <person name="Murakami K."/>
            <person name="Yasuda T."/>
            <person name="Iwayanagi T."/>
            <person name="Wagatsuma M."/>
            <person name="Shiratori A."/>
            <person name="Sudo H."/>
            <person name="Hosoiri T."/>
            <person name="Kaku Y."/>
            <person name="Kodaira H."/>
            <person name="Kondo H."/>
            <person name="Sugawara M."/>
            <person name="Takahashi M."/>
            <person name="Kanda K."/>
            <person name="Yokoi T."/>
            <person name="Furuya T."/>
            <person name="Kikkawa E."/>
            <person name="Omura Y."/>
            <person name="Abe K."/>
            <person name="Kamihara K."/>
            <person name="Katsuta N."/>
            <person name="Sato K."/>
            <person name="Tanikawa M."/>
            <person name="Yamazaki M."/>
            <person name="Ninomiya K."/>
            <person name="Ishibashi T."/>
            <person name="Yamashita H."/>
            <person name="Murakawa K."/>
            <person name="Fujimori K."/>
            <person name="Tanai H."/>
            <person name="Kimata M."/>
            <person name="Watanabe M."/>
            <person name="Hiraoka S."/>
            <person name="Chiba Y."/>
            <person name="Ishida S."/>
            <person name="Ono Y."/>
            <person name="Takiguchi S."/>
            <person name="Watanabe S."/>
            <person name="Yosida M."/>
            <person name="Hotuta T."/>
            <person name="Kusano J."/>
            <person name="Kanehori K."/>
            <person name="Takahashi-Fujii A."/>
            <person name="Hara H."/>
            <person name="Tanase T.-O."/>
            <person name="Nomura Y."/>
            <person name="Togiya S."/>
            <person name="Komai F."/>
            <person name="Hara R."/>
            <person name="Takeuchi K."/>
            <person name="Arita M."/>
            <person name="Imose N."/>
            <person name="Musashino K."/>
            <person name="Yuuki H."/>
            <person name="Oshima A."/>
            <person name="Sasaki N."/>
            <person name="Aotsuka S."/>
            <person name="Yoshikawa Y."/>
            <person name="Matsunawa H."/>
            <person name="Ichihara T."/>
            <person name="Shiohata N."/>
            <person name="Sano S."/>
            <person name="Moriya S."/>
            <person name="Momiyama H."/>
            <person name="Satoh N."/>
            <person name="Takami S."/>
            <person name="Terashima Y."/>
            <person name="Suzuki O."/>
            <person name="Nakagawa S."/>
            <person name="Senoh A."/>
            <person name="Mizoguchi H."/>
            <person name="Goto Y."/>
            <person name="Shimizu F."/>
            <person name="Wakebe H."/>
            <person name="Hishigaki H."/>
            <person name="Watanabe T."/>
            <person name="Sugiyama A."/>
            <person name="Takemoto M."/>
            <person name="Kawakami B."/>
            <person name="Yamazaki M."/>
            <person name="Watanabe K."/>
            <person name="Kumagai A."/>
            <person name="Itakura S."/>
            <person name="Fukuzumi Y."/>
            <person name="Fujimori Y."/>
            <person name="Komiyama M."/>
            <person name="Tashiro H."/>
            <person name="Tanigami A."/>
            <person name="Fujiwara T."/>
            <person name="Ono T."/>
            <person name="Yamada K."/>
            <person name="Fujii Y."/>
            <person name="Ozaki K."/>
            <person name="Hirao M."/>
            <person name="Ohmori Y."/>
            <person name="Kawabata A."/>
            <person name="Hikiji T."/>
            <person name="Kobatake N."/>
            <person name="Inagaki H."/>
            <person name="Ikema Y."/>
            <person name="Okamoto S."/>
            <person name="Okitani R."/>
            <person name="Kawakami T."/>
            <person name="Noguchi S."/>
            <person name="Itoh T."/>
            <person name="Shigeta K."/>
            <person name="Senba T."/>
            <person name="Matsumura K."/>
            <person name="Nakajima Y."/>
            <person name="Mizuno T."/>
            <person name="Morinaga M."/>
            <person name="Sasaki M."/>
            <person name="Togashi T."/>
            <person name="Oyama M."/>
            <person name="Hata H."/>
            <person name="Watanabe M."/>
            <person name="Komatsu T."/>
            <person name="Mizushima-Sugano J."/>
            <person name="Satoh T."/>
            <person name="Shirai Y."/>
            <person name="Takahashi Y."/>
            <person name="Nakagawa K."/>
            <person name="Okumura K."/>
            <person name="Nagase T."/>
            <person name="Nomura N."/>
            <person name="Kikuchi H."/>
            <person name="Masuho Y."/>
            <person name="Yamashita R."/>
            <person name="Nakai K."/>
            <person name="Yada T."/>
            <person name="Nakamura Y."/>
            <person name="Ohara O."/>
            <person name="Isogai T."/>
            <person name="Sugano S."/>
        </authorList>
    </citation>
    <scope>NUCLEOTIDE SEQUENCE [LARGE SCALE MRNA] (ISOFORMS 1 AND 2)</scope>
    <source>
        <tissue>Brain</tissue>
        <tissue>Caudate nucleus</tissue>
        <tissue>Cerebellum</tissue>
        <tissue>Prostate</tissue>
        <tissue>Small intestine</tissue>
    </source>
</reference>
<reference key="3">
    <citation type="journal article" date="2005" name="Nature">
        <title>Generation and annotation of the DNA sequences of human chromosomes 2 and 4.</title>
        <authorList>
            <person name="Hillier L.W."/>
            <person name="Graves T.A."/>
            <person name="Fulton R.S."/>
            <person name="Fulton L.A."/>
            <person name="Pepin K.H."/>
            <person name="Minx P."/>
            <person name="Wagner-McPherson C."/>
            <person name="Layman D."/>
            <person name="Wylie K."/>
            <person name="Sekhon M."/>
            <person name="Becker M.C."/>
            <person name="Fewell G.A."/>
            <person name="Delehaunty K.D."/>
            <person name="Miner T.L."/>
            <person name="Nash W.E."/>
            <person name="Kremitzki C."/>
            <person name="Oddy L."/>
            <person name="Du H."/>
            <person name="Sun H."/>
            <person name="Bradshaw-Cordum H."/>
            <person name="Ali J."/>
            <person name="Carter J."/>
            <person name="Cordes M."/>
            <person name="Harris A."/>
            <person name="Isak A."/>
            <person name="van Brunt A."/>
            <person name="Nguyen C."/>
            <person name="Du F."/>
            <person name="Courtney L."/>
            <person name="Kalicki J."/>
            <person name="Ozersky P."/>
            <person name="Abbott S."/>
            <person name="Armstrong J."/>
            <person name="Belter E.A."/>
            <person name="Caruso L."/>
            <person name="Cedroni M."/>
            <person name="Cotton M."/>
            <person name="Davidson T."/>
            <person name="Desai A."/>
            <person name="Elliott G."/>
            <person name="Erb T."/>
            <person name="Fronick C."/>
            <person name="Gaige T."/>
            <person name="Haakenson W."/>
            <person name="Haglund K."/>
            <person name="Holmes A."/>
            <person name="Harkins R."/>
            <person name="Kim K."/>
            <person name="Kruchowski S.S."/>
            <person name="Strong C.M."/>
            <person name="Grewal N."/>
            <person name="Goyea E."/>
            <person name="Hou S."/>
            <person name="Levy A."/>
            <person name="Martinka S."/>
            <person name="Mead K."/>
            <person name="McLellan M.D."/>
            <person name="Meyer R."/>
            <person name="Randall-Maher J."/>
            <person name="Tomlinson C."/>
            <person name="Dauphin-Kohlberg S."/>
            <person name="Kozlowicz-Reilly A."/>
            <person name="Shah N."/>
            <person name="Swearengen-Shahid S."/>
            <person name="Snider J."/>
            <person name="Strong J.T."/>
            <person name="Thompson J."/>
            <person name="Yoakum M."/>
            <person name="Leonard S."/>
            <person name="Pearman C."/>
            <person name="Trani L."/>
            <person name="Radionenko M."/>
            <person name="Waligorski J.E."/>
            <person name="Wang C."/>
            <person name="Rock S.M."/>
            <person name="Tin-Wollam A.-M."/>
            <person name="Maupin R."/>
            <person name="Latreille P."/>
            <person name="Wendl M.C."/>
            <person name="Yang S.-P."/>
            <person name="Pohl C."/>
            <person name="Wallis J.W."/>
            <person name="Spieth J."/>
            <person name="Bieri T.A."/>
            <person name="Berkowicz N."/>
            <person name="Nelson J.O."/>
            <person name="Osborne J."/>
            <person name="Ding L."/>
            <person name="Meyer R."/>
            <person name="Sabo A."/>
            <person name="Shotland Y."/>
            <person name="Sinha P."/>
            <person name="Wohldmann P.E."/>
            <person name="Cook L.L."/>
            <person name="Hickenbotham M.T."/>
            <person name="Eldred J."/>
            <person name="Williams D."/>
            <person name="Jones T.A."/>
            <person name="She X."/>
            <person name="Ciccarelli F.D."/>
            <person name="Izaurralde E."/>
            <person name="Taylor J."/>
            <person name="Schmutz J."/>
            <person name="Myers R.M."/>
            <person name="Cox D.R."/>
            <person name="Huang X."/>
            <person name="McPherson J.D."/>
            <person name="Mardis E.R."/>
            <person name="Clifton S.W."/>
            <person name="Warren W.C."/>
            <person name="Chinwalla A.T."/>
            <person name="Eddy S.R."/>
            <person name="Marra M.A."/>
            <person name="Ovcharenko I."/>
            <person name="Furey T.S."/>
            <person name="Miller W."/>
            <person name="Eichler E.E."/>
            <person name="Bork P."/>
            <person name="Suyama M."/>
            <person name="Torrents D."/>
            <person name="Waterston R.H."/>
            <person name="Wilson R.K."/>
        </authorList>
    </citation>
    <scope>NUCLEOTIDE SEQUENCE [LARGE SCALE GENOMIC DNA]</scope>
</reference>
<reference key="4">
    <citation type="submission" date="2005-07" db="EMBL/GenBank/DDBJ databases">
        <authorList>
            <person name="Mural R.J."/>
            <person name="Istrail S."/>
            <person name="Sutton G.G."/>
            <person name="Florea L."/>
            <person name="Halpern A.L."/>
            <person name="Mobarry C.M."/>
            <person name="Lippert R."/>
            <person name="Walenz B."/>
            <person name="Shatkay H."/>
            <person name="Dew I."/>
            <person name="Miller J.R."/>
            <person name="Flanigan M.J."/>
            <person name="Edwards N.J."/>
            <person name="Bolanos R."/>
            <person name="Fasulo D."/>
            <person name="Halldorsson B.V."/>
            <person name="Hannenhalli S."/>
            <person name="Turner R."/>
            <person name="Yooseph S."/>
            <person name="Lu F."/>
            <person name="Nusskern D.R."/>
            <person name="Shue B.C."/>
            <person name="Zheng X.H."/>
            <person name="Zhong F."/>
            <person name="Delcher A.L."/>
            <person name="Huson D.H."/>
            <person name="Kravitz S.A."/>
            <person name="Mouchard L."/>
            <person name="Reinert K."/>
            <person name="Remington K.A."/>
            <person name="Clark A.G."/>
            <person name="Waterman M.S."/>
            <person name="Eichler E.E."/>
            <person name="Adams M.D."/>
            <person name="Hunkapiller M.W."/>
            <person name="Myers E.W."/>
            <person name="Venter J.C."/>
        </authorList>
    </citation>
    <scope>NUCLEOTIDE SEQUENCE [LARGE SCALE GENOMIC DNA]</scope>
</reference>
<reference key="5">
    <citation type="journal article" date="2004" name="Genome Res.">
        <title>The status, quality, and expansion of the NIH full-length cDNA project: the Mammalian Gene Collection (MGC).</title>
        <authorList>
            <consortium name="The MGC Project Team"/>
        </authorList>
    </citation>
    <scope>NUCLEOTIDE SEQUENCE [LARGE SCALE MRNA] (ISOFORM 1)</scope>
    <scope>VARIANT TYR-277</scope>
    <source>
        <tissue>Testis</tissue>
    </source>
</reference>
<reference key="6">
    <citation type="submission" date="2008-03" db="UniProtKB">
        <authorList>
            <person name="Bienvenut W.V."/>
            <person name="Vousden K.H."/>
            <person name="Lukashchuk N."/>
        </authorList>
    </citation>
    <scope>PROTEIN SEQUENCE OF 177-188; 243-253 AND 318-325</scope>
    <scope>IDENTIFICATION BY MASS SPECTROMETRY</scope>
    <source>
        <tissue>Lung carcinoma</tissue>
    </source>
</reference>
<reference key="7">
    <citation type="journal article" date="2008" name="Proc. Natl. Acad. Sci. U.S.A.">
        <title>A quantitative atlas of mitotic phosphorylation.</title>
        <authorList>
            <person name="Dephoure N."/>
            <person name="Zhou C."/>
            <person name="Villen J."/>
            <person name="Beausoleil S.A."/>
            <person name="Bakalarski C.E."/>
            <person name="Elledge S.J."/>
            <person name="Gygi S.P."/>
        </authorList>
    </citation>
    <scope>IDENTIFICATION BY MASS SPECTROMETRY [LARGE SCALE ANALYSIS]</scope>
    <source>
        <tissue>Cervix carcinoma</tissue>
    </source>
</reference>
<reference key="8">
    <citation type="journal article" date="2009" name="Sci. Signal.">
        <title>Quantitative phosphoproteomic analysis of T cell receptor signaling reveals system-wide modulation of protein-protein interactions.</title>
        <authorList>
            <person name="Mayya V."/>
            <person name="Lundgren D.H."/>
            <person name="Hwang S.-I."/>
            <person name="Rezaul K."/>
            <person name="Wu L."/>
            <person name="Eng J.K."/>
            <person name="Rodionov V."/>
            <person name="Han D.K."/>
        </authorList>
    </citation>
    <scope>PHOSPHORYLATION [LARGE SCALE ANALYSIS] AT SER-244</scope>
    <scope>IDENTIFICATION BY MASS SPECTROMETRY [LARGE SCALE ANALYSIS]</scope>
    <source>
        <tissue>Leukemic T-cell</tissue>
    </source>
</reference>
<reference key="9">
    <citation type="journal article" date="2011" name="BMC Syst. Biol.">
        <title>Initial characterization of the human central proteome.</title>
        <authorList>
            <person name="Burkard T.R."/>
            <person name="Planyavsky M."/>
            <person name="Kaupe I."/>
            <person name="Breitwieser F.P."/>
            <person name="Buerckstuemmer T."/>
            <person name="Bennett K.L."/>
            <person name="Superti-Furga G."/>
            <person name="Colinge J."/>
        </authorList>
    </citation>
    <scope>IDENTIFICATION BY MASS SPECTROMETRY [LARGE SCALE ANALYSIS]</scope>
</reference>
<reference key="10">
    <citation type="journal article" date="2011" name="Sci. Signal.">
        <title>System-wide temporal characterization of the proteome and phosphoproteome of human embryonic stem cell differentiation.</title>
        <authorList>
            <person name="Rigbolt K.T."/>
            <person name="Prokhorova T.A."/>
            <person name="Akimov V."/>
            <person name="Henningsen J."/>
            <person name="Johansen P.T."/>
            <person name="Kratchmarova I."/>
            <person name="Kassem M."/>
            <person name="Mann M."/>
            <person name="Olsen J.V."/>
            <person name="Blagoev B."/>
        </authorList>
    </citation>
    <scope>PHOSPHORYLATION [LARGE SCALE ANALYSIS] AT SER-335</scope>
    <scope>IDENTIFICATION BY MASS SPECTROMETRY [LARGE SCALE ANALYSIS]</scope>
</reference>
<reference key="11">
    <citation type="journal article" date="2012" name="Proc. Natl. Acad. Sci. U.S.A.">
        <title>N-terminal acetylome analyses and functional insights of the N-terminal acetyltransferase NatB.</title>
        <authorList>
            <person name="Van Damme P."/>
            <person name="Lasa M."/>
            <person name="Polevoda B."/>
            <person name="Gazquez C."/>
            <person name="Elosegui-Artola A."/>
            <person name="Kim D.S."/>
            <person name="De Juan-Pardo E."/>
            <person name="Demeyer K."/>
            <person name="Hole K."/>
            <person name="Larrea E."/>
            <person name="Timmerman E."/>
            <person name="Prieto J."/>
            <person name="Arnesen T."/>
            <person name="Sherman F."/>
            <person name="Gevaert K."/>
            <person name="Aldabe R."/>
        </authorList>
    </citation>
    <scope>IDENTIFICATION BY MASS SPECTROMETRY [LARGE SCALE ANALYSIS]</scope>
</reference>
<reference key="12">
    <citation type="journal article" date="2013" name="Cell Metab.">
        <title>The mitochondrial RNA-binding protein GRSF1 localizes to RNA granules and is required for posttranscriptional mitochondrial gene expression.</title>
        <authorList>
            <person name="Antonicka H."/>
            <person name="Sasarman F."/>
            <person name="Nishimura T."/>
            <person name="Paupe V."/>
            <person name="Shoubridge E.A."/>
        </authorList>
    </citation>
    <scope>FUNCTION</scope>
    <scope>RNA-BINDING</scope>
    <scope>SUBCELLULAR LOCATION</scope>
</reference>
<reference key="13">
    <citation type="journal article" date="2013" name="Cell Metab.">
        <title>GRSF1 regulates RNA processing in mitochondrial RNA granules.</title>
        <authorList>
            <person name="Jourdain A.A."/>
            <person name="Koppen M."/>
            <person name="Wydro M."/>
            <person name="Rodley C.D."/>
            <person name="Lightowlers R.N."/>
            <person name="Chrzanowska-Lightowlers Z.M."/>
            <person name="Martinou J.C."/>
        </authorList>
    </citation>
    <scope>FUNCTION</scope>
    <scope>RNA-BINDING</scope>
    <scope>SUBCELLULAR LOCATION (ISOFORMS 1 AND 2)</scope>
    <scope>INTERACTION WITH TRMT10C</scope>
</reference>
<reference key="14">
    <citation type="journal article" date="2013" name="J. Proteome Res.">
        <title>Toward a comprehensive characterization of a human cancer cell phosphoproteome.</title>
        <authorList>
            <person name="Zhou H."/>
            <person name="Di Palma S."/>
            <person name="Preisinger C."/>
            <person name="Peng M."/>
            <person name="Polat A.N."/>
            <person name="Heck A.J."/>
            <person name="Mohammed S."/>
        </authorList>
    </citation>
    <scope>IDENTIFICATION BY MASS SPECTROMETRY [LARGE SCALE ANALYSIS]</scope>
    <source>
        <tissue>Cervix carcinoma</tissue>
        <tissue>Erythroleukemia</tissue>
    </source>
</reference>
<reference key="15">
    <citation type="journal article" date="2015" name="Cell Rep.">
        <title>Mitochondrial RNA granules are centers for post-transcriptional RNA processing and ribosome biogenesis.</title>
        <authorList>
            <person name="Antonicka H."/>
            <person name="Shoubridge E.A."/>
        </authorList>
    </citation>
    <scope>IDENTIFICATION IN A COMPLEX WITH DDX28; DHX30; FASTKD2 AND FASTKD5</scope>
    <scope>SUBCELLULAR LOCATION</scope>
    <scope>IDENTIFICATION BY MASS SPECTROMETRY</scope>
</reference>
<reference key="16">
    <citation type="journal article" date="2015" name="Proteomics">
        <title>N-terminome analysis of the human mitochondrial proteome.</title>
        <authorList>
            <person name="Vaca Jacome A.S."/>
            <person name="Rabilloud T."/>
            <person name="Schaeffer-Reiss C."/>
            <person name="Rompais M."/>
            <person name="Ayoub D."/>
            <person name="Lane L."/>
            <person name="Bairoch A."/>
            <person name="Van Dorsselaer A."/>
            <person name="Carapito C."/>
        </authorList>
    </citation>
    <scope>IDENTIFICATION BY MASS SPECTROMETRY [LARGE SCALE ANALYSIS]</scope>
</reference>
<reference key="17">
    <citation type="journal article" date="2018" name="Nat. Commun.">
        <title>Dedicated surveillance mechanism controls G-quadruplex forming non-coding RNAs in human mitochondria.</title>
        <authorList>
            <person name="Pietras Z."/>
            <person name="Wojcik M.A."/>
            <person name="Borowski L.S."/>
            <person name="Szewczyk M."/>
            <person name="Kulinski T.M."/>
            <person name="Cysewski D."/>
            <person name="Stepien P.P."/>
            <person name="Dziembowski A."/>
            <person name="Szczesny R.J."/>
        </authorList>
    </citation>
    <scope>FUNCTION</scope>
    <scope>RNA-BINDING</scope>
    <scope>SUBCELLULAR LOCATION</scope>
    <scope>INTERACTION WITH PNPT1 AND SUPV3L1</scope>
    <scope>DOMAIN</scope>
    <scope>IDENTIFICATION BY MASS SPECTROMETRY</scope>
    <scope>MUTAGENESIS OF GLN-155; TRP-159; GLU-223; ARG-255; TYR-259; GLU-320; ARG-406; PHE-410 AND GLU-470</scope>
</reference>
<reference evidence="10" key="18">
    <citation type="submission" date="2011-12" db="PDB data bank">
        <title>NMR structure of the human RNA binding protein BC040485.</title>
        <authorList>
            <person name="Dutta S.K."/>
            <person name="Serrano P."/>
            <person name="Geralt M."/>
            <person name="Wuthrich K."/>
        </authorList>
    </citation>
    <scope>STRUCTURE BY NMR OF 140-245</scope>
</reference>
<reference evidence="11 12" key="19">
    <citation type="submission" date="2014-07" db="PDB data bank">
        <title>Crystal structure of a G-rich RNA sequence binding factor 1 (GRSF1) from Homo sapiens at 1.75 A resolution.</title>
        <authorList>
            <consortium name="Joint Center for Structural Genomics (JCSG), Partnership for T-Cell Biology (TCELL)"/>
        </authorList>
    </citation>
    <scope>X-RAY CRYSTALLOGRAPHY (1.75 ANGSTROMS) OF 140-245 IN COMPLEX WITH RNA</scope>
</reference>
<accession>Q12849</accession>
<accession>B3KPW0</accession>
<accession>Q4W5S5</accession>
<accession>Q6ZST3</accession>
<accession>Q8IWD6</accession>
<accession>Q8NBD2</accession>
<evidence type="ECO:0000255" key="1"/>
<evidence type="ECO:0000255" key="2">
    <source>
        <dbReference type="PROSITE-ProRule" id="PRU00176"/>
    </source>
</evidence>
<evidence type="ECO:0000269" key="3">
    <source>
    </source>
</evidence>
<evidence type="ECO:0000269" key="4">
    <source>
    </source>
</evidence>
<evidence type="ECO:0000269" key="5">
    <source>
    </source>
</evidence>
<evidence type="ECO:0000269" key="6">
    <source>
    </source>
</evidence>
<evidence type="ECO:0000269" key="7">
    <source>
    </source>
</evidence>
<evidence type="ECO:0000303" key="8">
    <source>
    </source>
</evidence>
<evidence type="ECO:0000305" key="9"/>
<evidence type="ECO:0007744" key="10">
    <source>
        <dbReference type="PDB" id="2LMI"/>
    </source>
</evidence>
<evidence type="ECO:0007744" key="11">
    <source>
        <dbReference type="PDB" id="4QU6"/>
    </source>
</evidence>
<evidence type="ECO:0007744" key="12">
    <source>
        <dbReference type="PDB" id="4QU7"/>
    </source>
</evidence>
<evidence type="ECO:0007744" key="13">
    <source>
    </source>
</evidence>
<evidence type="ECO:0007744" key="14">
    <source>
    </source>
</evidence>
<evidence type="ECO:0007829" key="15">
    <source>
        <dbReference type="PDB" id="4QU6"/>
    </source>
</evidence>
<evidence type="ECO:0007829" key="16">
    <source>
        <dbReference type="PDB" id="4QU7"/>
    </source>
</evidence>
<name>GRSF1_HUMAN</name>
<keyword id="KW-0002">3D-structure</keyword>
<keyword id="KW-0025">Alternative splicing</keyword>
<keyword id="KW-0963">Cytoplasm</keyword>
<keyword id="KW-0903">Direct protein sequencing</keyword>
<keyword id="KW-0496">Mitochondrion</keyword>
<keyword id="KW-0507">mRNA processing</keyword>
<keyword id="KW-0597">Phosphoprotein</keyword>
<keyword id="KW-1267">Proteomics identification</keyword>
<keyword id="KW-1185">Reference proteome</keyword>
<keyword id="KW-0677">Repeat</keyword>
<keyword id="KW-0694">RNA-binding</keyword>
<keyword id="KW-0809">Transit peptide</keyword>
<keyword id="KW-0819">tRNA processing</keyword>
<organism>
    <name type="scientific">Homo sapiens</name>
    <name type="common">Human</name>
    <dbReference type="NCBI Taxonomy" id="9606"/>
    <lineage>
        <taxon>Eukaryota</taxon>
        <taxon>Metazoa</taxon>
        <taxon>Chordata</taxon>
        <taxon>Craniata</taxon>
        <taxon>Vertebrata</taxon>
        <taxon>Euteleostomi</taxon>
        <taxon>Mammalia</taxon>
        <taxon>Eutheria</taxon>
        <taxon>Euarchontoglires</taxon>
        <taxon>Primates</taxon>
        <taxon>Haplorrhini</taxon>
        <taxon>Catarrhini</taxon>
        <taxon>Hominidae</taxon>
        <taxon>Homo</taxon>
    </lineage>
</organism>
<proteinExistence type="evidence at protein level"/>
<feature type="transit peptide" description="Mitochondrion" evidence="1">
    <location>
        <begin position="1"/>
        <end position="117"/>
    </location>
</feature>
<feature type="chain" id="PRO_0000081597" description="G-rich sequence factor 1">
    <location>
        <begin position="118"/>
        <end position="480"/>
    </location>
</feature>
<feature type="domain" description="RRM 1" evidence="2">
    <location>
        <begin position="122"/>
        <end position="246"/>
    </location>
</feature>
<feature type="domain" description="RRM 2" evidence="2">
    <location>
        <begin position="250"/>
        <end position="326"/>
    </location>
</feature>
<feature type="domain" description="RRM 3" evidence="2">
    <location>
        <begin position="401"/>
        <end position="480"/>
    </location>
</feature>
<feature type="modified residue" description="Phosphoserine" evidence="13">
    <location>
        <position position="244"/>
    </location>
</feature>
<feature type="modified residue" description="Phosphoserine" evidence="14">
    <location>
        <position position="335"/>
    </location>
</feature>
<feature type="splice variant" id="VSP_043118" description="In isoform 2." evidence="8">
    <location>
        <begin position="1"/>
        <end position="162"/>
    </location>
</feature>
<feature type="sequence variant" id="VAR_047537" description="In dbSNP:rs17854012." evidence="3">
    <original>D</original>
    <variation>Y</variation>
    <location>
        <position position="277"/>
    </location>
</feature>
<feature type="mutagenesis site" description="Impairs RNA-binding and melting of G-quadruplex RNA structures; when associated with A-159; A-223; A-255; A-259; A-320; A-406; A-410 and A-470.">
    <original>Q</original>
    <variation>A</variation>
    <location>
        <position position="155"/>
    </location>
</feature>
<feature type="mutagenesis site" description="Impairs RNA-binding and melting of G-quadruplex RNA structures; when associated with A-155; A-223; A-255; A-259; A-320; A-406; A-410 and A-470.">
    <original>W</original>
    <variation>A</variation>
    <location>
        <position position="159"/>
    </location>
</feature>
<feature type="mutagenesis site" description="Impairs RNA-binding and melting of G-quadruplex RNA structures; when associated with A-155; A-159; A-255; A-259; A-320; A-406; A-410 and A-470.">
    <original>E</original>
    <variation>A</variation>
    <location>
        <position position="223"/>
    </location>
</feature>
<feature type="mutagenesis site" description="Impairs RNA-binding and melting of G-quadruplex RNA structures; when associated with A-155; A-159; A-223; A-259; A-320; A-406; A-410 and A-470.">
    <original>R</original>
    <variation>A</variation>
    <location>
        <position position="255"/>
    </location>
</feature>
<feature type="mutagenesis site" description="Impairs RNA-binding and melting of G-quadruplex RNA structures; when associated with A-155; A-159; A-223; A-255; A-320; A-406; A-410 and A-470.">
    <original>Y</original>
    <variation>A</variation>
    <location>
        <position position="259"/>
    </location>
</feature>
<feature type="mutagenesis site" description="Impairs RNA-binding and melting of G-quadruplex RNA structures; when associated with A-155; A-159; A-223; A-255; A-259; A-406; A-410 and A-470.">
    <original>E</original>
    <variation>A</variation>
    <location>
        <position position="320"/>
    </location>
</feature>
<feature type="mutagenesis site" description="Impairs RNA-binding and melting of G-quadruplex RNA structures; when associated with A-155; A-159; A-223; A-255; A-259; A-320; A-410 and A-470.">
    <original>R</original>
    <variation>A</variation>
    <location>
        <position position="406"/>
    </location>
</feature>
<feature type="mutagenesis site" description="Impairs RNA-binding and melting of G-quadruplex RNA structures; when associated with A-155; A-159; A-223; A-255; A-259; A-320; A-406 and A-470.">
    <original>F</original>
    <variation>A</variation>
    <location>
        <position position="410"/>
    </location>
</feature>
<feature type="mutagenesis site" description="Impairs RNA-binding and melting of G-quadruplex RNA structures; when associated with A-155; A-159; A-223; A-255; A-259; A-320; A-406 and A-410.">
    <original>E</original>
    <variation>A</variation>
    <location>
        <position position="470"/>
    </location>
</feature>
<feature type="sequence conflict" description="In Ref. 2; BAC86863." evidence="9" ref="2">
    <original>K</original>
    <variation>E</variation>
    <location>
        <position position="264"/>
    </location>
</feature>
<feature type="sequence conflict" description="In Ref. 1; AAC95399." evidence="9" ref="1">
    <original>DI</original>
    <variation>VF</variation>
    <location>
        <begin position="365"/>
        <end position="366"/>
    </location>
</feature>
<feature type="strand" evidence="15">
    <location>
        <begin position="150"/>
        <end position="156"/>
    </location>
</feature>
<feature type="helix" evidence="15">
    <location>
        <begin position="163"/>
        <end position="169"/>
    </location>
</feature>
<feature type="turn" evidence="15">
    <location>
        <begin position="170"/>
        <end position="172"/>
    </location>
</feature>
<feature type="helix" evidence="15">
    <location>
        <begin position="178"/>
        <end position="181"/>
    </location>
</feature>
<feature type="strand" evidence="15">
    <location>
        <begin position="182"/>
        <end position="186"/>
    </location>
</feature>
<feature type="strand" evidence="15">
    <location>
        <begin position="192"/>
        <end position="202"/>
    </location>
</feature>
<feature type="helix" evidence="15">
    <location>
        <begin position="203"/>
        <end position="210"/>
    </location>
</feature>
<feature type="turn" evidence="15">
    <location>
        <begin position="211"/>
        <end position="214"/>
    </location>
</feature>
<feature type="strand" evidence="15">
    <location>
        <begin position="215"/>
        <end position="217"/>
    </location>
</feature>
<feature type="strand" evidence="15">
    <location>
        <begin position="220"/>
        <end position="226"/>
    </location>
</feature>
<feature type="helix" evidence="15">
    <location>
        <begin position="230"/>
        <end position="242"/>
    </location>
</feature>
<feature type="strand" evidence="16">
    <location>
        <begin position="402"/>
        <end position="406"/>
    </location>
</feature>
<feature type="helix" evidence="16">
    <location>
        <begin position="414"/>
        <end position="421"/>
    </location>
</feature>
<feature type="strand" evidence="16">
    <location>
        <begin position="427"/>
        <end position="434"/>
    </location>
</feature>
<feature type="strand" evidence="16">
    <location>
        <begin position="439"/>
        <end position="446"/>
    </location>
</feature>
<feature type="helix" evidence="16">
    <location>
        <begin position="450"/>
        <end position="456"/>
    </location>
</feature>
<feature type="helix" evidence="16">
    <location>
        <begin position="457"/>
        <end position="459"/>
    </location>
</feature>
<feature type="strand" evidence="16">
    <location>
        <begin position="470"/>
        <end position="476"/>
    </location>
</feature>
<dbReference type="EMBL" id="U07231">
    <property type="protein sequence ID" value="AAC95399.1"/>
    <property type="status" value="ALT_SEQ"/>
    <property type="molecule type" value="mRNA"/>
</dbReference>
<dbReference type="EMBL" id="AK056891">
    <property type="protein sequence ID" value="BAG51822.1"/>
    <property type="molecule type" value="mRNA"/>
</dbReference>
<dbReference type="EMBL" id="AK090755">
    <property type="protein sequence ID" value="BAC03513.1"/>
    <property type="status" value="ALT_SEQ"/>
    <property type="molecule type" value="mRNA"/>
</dbReference>
<dbReference type="EMBL" id="AK094806">
    <property type="protein sequence ID" value="BAG52934.1"/>
    <property type="molecule type" value="mRNA"/>
</dbReference>
<dbReference type="EMBL" id="AK095799">
    <property type="protein sequence ID" value="BAG53131.1"/>
    <property type="molecule type" value="mRNA"/>
</dbReference>
<dbReference type="EMBL" id="AK097055">
    <property type="protein sequence ID" value="BAG53414.1"/>
    <property type="molecule type" value="mRNA"/>
</dbReference>
<dbReference type="EMBL" id="AK127161">
    <property type="protein sequence ID" value="BAC86863.1"/>
    <property type="status" value="ALT_SEQ"/>
    <property type="molecule type" value="mRNA"/>
</dbReference>
<dbReference type="EMBL" id="AC021989">
    <property type="protein sequence ID" value="AAY40942.1"/>
    <property type="status" value="ALT_SEQ"/>
    <property type="molecule type" value="Genomic_DNA"/>
</dbReference>
<dbReference type="EMBL" id="CH471057">
    <property type="protein sequence ID" value="EAX05631.1"/>
    <property type="molecule type" value="Genomic_DNA"/>
</dbReference>
<dbReference type="EMBL" id="CH471057">
    <property type="protein sequence ID" value="EAX05634.1"/>
    <property type="status" value="ALT_SEQ"/>
    <property type="molecule type" value="Genomic_DNA"/>
</dbReference>
<dbReference type="EMBL" id="BC040485">
    <property type="protein sequence ID" value="AAH40485.1"/>
    <property type="status" value="ALT_SEQ"/>
    <property type="molecule type" value="mRNA"/>
</dbReference>
<dbReference type="CCDS" id="CCDS47069.1">
    <molecule id="Q12849-1"/>
</dbReference>
<dbReference type="CCDS" id="CCDS47070.1">
    <molecule id="Q12849-5"/>
</dbReference>
<dbReference type="PIR" id="S48081">
    <property type="entry name" value="S48081"/>
</dbReference>
<dbReference type="RefSeq" id="NP_001091947.1">
    <molecule id="Q12849-5"/>
    <property type="nucleotide sequence ID" value="NM_001098477.2"/>
</dbReference>
<dbReference type="RefSeq" id="NP_002083.3">
    <molecule id="Q12849-1"/>
    <property type="nucleotide sequence ID" value="NM_002092.3"/>
</dbReference>
<dbReference type="RefSeq" id="XP_011530199.1">
    <molecule id="Q12849-5"/>
    <property type="nucleotide sequence ID" value="XM_011531897.4"/>
</dbReference>
<dbReference type="RefSeq" id="XP_054205814.1">
    <molecule id="Q12849-5"/>
    <property type="nucleotide sequence ID" value="XM_054349839.1"/>
</dbReference>
<dbReference type="PDB" id="2LMI">
    <property type="method" value="NMR"/>
    <property type="chains" value="A=140-245"/>
</dbReference>
<dbReference type="PDB" id="4QU6">
    <property type="method" value="X-ray"/>
    <property type="resolution" value="1.75 A"/>
    <property type="chains" value="A=140-245"/>
</dbReference>
<dbReference type="PDB" id="4QU7">
    <property type="method" value="X-ray"/>
    <property type="resolution" value="2.50 A"/>
    <property type="chains" value="A/B/C/D=400-480"/>
</dbReference>
<dbReference type="PDBsum" id="2LMI"/>
<dbReference type="PDBsum" id="4QU6"/>
<dbReference type="PDBsum" id="4QU7"/>
<dbReference type="SMR" id="Q12849"/>
<dbReference type="BioGRID" id="109182">
    <property type="interactions" value="524"/>
</dbReference>
<dbReference type="CORUM" id="Q12849"/>
<dbReference type="FunCoup" id="Q12849">
    <property type="interactions" value="1945"/>
</dbReference>
<dbReference type="IntAct" id="Q12849">
    <property type="interactions" value="48"/>
</dbReference>
<dbReference type="MINT" id="Q12849"/>
<dbReference type="STRING" id="9606.ENSP00000254799"/>
<dbReference type="GlyGen" id="Q12849">
    <property type="glycosylation" value="4 sites, 2 O-linked glycans (4 sites)"/>
</dbReference>
<dbReference type="iPTMnet" id="Q12849"/>
<dbReference type="MetOSite" id="Q12849"/>
<dbReference type="PhosphoSitePlus" id="Q12849"/>
<dbReference type="SwissPalm" id="Q12849"/>
<dbReference type="BioMuta" id="GRSF1"/>
<dbReference type="DMDM" id="215274142"/>
<dbReference type="jPOST" id="Q12849"/>
<dbReference type="MassIVE" id="Q12849"/>
<dbReference type="PaxDb" id="9606-ENSP00000254799"/>
<dbReference type="PeptideAtlas" id="Q12849"/>
<dbReference type="ProteomicsDB" id="58982">
    <molecule id="Q12849-1"/>
</dbReference>
<dbReference type="ProteomicsDB" id="58983">
    <molecule id="Q12849-5"/>
</dbReference>
<dbReference type="Pumba" id="Q12849"/>
<dbReference type="Antibodypedia" id="24367">
    <property type="antibodies" value="171 antibodies from 23 providers"/>
</dbReference>
<dbReference type="DNASU" id="2926"/>
<dbReference type="Ensembl" id="ENST00000254799.11">
    <molecule id="Q12849-1"/>
    <property type="protein sequence ID" value="ENSP00000254799.6"/>
    <property type="gene ID" value="ENSG00000132463.15"/>
</dbReference>
<dbReference type="Ensembl" id="ENST00000502323.5">
    <molecule id="Q12849-5"/>
    <property type="protein sequence ID" value="ENSP00000425430.1"/>
    <property type="gene ID" value="ENSG00000132463.15"/>
</dbReference>
<dbReference type="GeneID" id="2926"/>
<dbReference type="KEGG" id="hsa:2926"/>
<dbReference type="MANE-Select" id="ENST00000254799.11">
    <property type="protein sequence ID" value="ENSP00000254799.6"/>
    <property type="RefSeq nucleotide sequence ID" value="NM_002092.4"/>
    <property type="RefSeq protein sequence ID" value="NP_002083.4"/>
</dbReference>
<dbReference type="UCSC" id="uc010iia.2">
    <molecule id="Q12849-1"/>
    <property type="organism name" value="human"/>
</dbReference>
<dbReference type="AGR" id="HGNC:4610"/>
<dbReference type="CTD" id="2926"/>
<dbReference type="DisGeNET" id="2926"/>
<dbReference type="GeneCards" id="GRSF1"/>
<dbReference type="HGNC" id="HGNC:4610">
    <property type="gene designation" value="GRSF1"/>
</dbReference>
<dbReference type="HPA" id="ENSG00000132463">
    <property type="expression patterns" value="Tissue enhanced (skeletal)"/>
</dbReference>
<dbReference type="MIM" id="604851">
    <property type="type" value="gene"/>
</dbReference>
<dbReference type="neXtProt" id="NX_Q12849"/>
<dbReference type="OpenTargets" id="ENSG00000132463"/>
<dbReference type="PharmGKB" id="PA29003"/>
<dbReference type="VEuPathDB" id="HostDB:ENSG00000132463"/>
<dbReference type="eggNOG" id="KOG4211">
    <property type="taxonomic scope" value="Eukaryota"/>
</dbReference>
<dbReference type="GeneTree" id="ENSGT00940000158529"/>
<dbReference type="HOGENOM" id="CLU_032003_0_0_1"/>
<dbReference type="InParanoid" id="Q12849"/>
<dbReference type="OMA" id="WSCTAQD"/>
<dbReference type="OrthoDB" id="431068at2759"/>
<dbReference type="PAN-GO" id="Q12849">
    <property type="GO annotations" value="4 GO annotations based on evolutionary models"/>
</dbReference>
<dbReference type="PhylomeDB" id="Q12849"/>
<dbReference type="TreeFam" id="TF316157"/>
<dbReference type="PathwayCommons" id="Q12849"/>
<dbReference type="Reactome" id="R-HSA-192823">
    <property type="pathway name" value="Viral mRNA Translation"/>
</dbReference>
<dbReference type="Reactome" id="R-HSA-9836573">
    <property type="pathway name" value="Mitochondrial RNA degradation"/>
</dbReference>
<dbReference type="SignaLink" id="Q12849"/>
<dbReference type="SIGNOR" id="Q12849"/>
<dbReference type="BioGRID-ORCS" id="2926">
    <property type="hits" value="227 hits in 1168 CRISPR screens"/>
</dbReference>
<dbReference type="CD-CODE" id="232F8A39">
    <property type="entry name" value="P-body"/>
</dbReference>
<dbReference type="CD-CODE" id="5965E019">
    <property type="entry name" value="mtRNA granule"/>
</dbReference>
<dbReference type="CD-CODE" id="DEE660B4">
    <property type="entry name" value="Stress granule"/>
</dbReference>
<dbReference type="ChiTaRS" id="GRSF1">
    <property type="organism name" value="human"/>
</dbReference>
<dbReference type="EvolutionaryTrace" id="Q12849"/>
<dbReference type="GenomeRNAi" id="2926"/>
<dbReference type="Pharos" id="Q12849">
    <property type="development level" value="Tbio"/>
</dbReference>
<dbReference type="PRO" id="PR:Q12849"/>
<dbReference type="Proteomes" id="UP000005640">
    <property type="component" value="Chromosome 4"/>
</dbReference>
<dbReference type="RNAct" id="Q12849">
    <property type="molecule type" value="protein"/>
</dbReference>
<dbReference type="Bgee" id="ENSG00000132463">
    <property type="expression patterns" value="Expressed in parotid gland and 214 other cell types or tissues"/>
</dbReference>
<dbReference type="ExpressionAtlas" id="Q12849">
    <property type="expression patterns" value="baseline and differential"/>
</dbReference>
<dbReference type="GO" id="GO:0005737">
    <property type="term" value="C:cytoplasm"/>
    <property type="evidence" value="ECO:0000314"/>
    <property type="project" value="UniProtKB"/>
</dbReference>
<dbReference type="GO" id="GO:0005759">
    <property type="term" value="C:mitochondrial matrix"/>
    <property type="evidence" value="ECO:0000304"/>
    <property type="project" value="Reactome"/>
</dbReference>
<dbReference type="GO" id="GO:0042645">
    <property type="term" value="C:mitochondrial nucleoid"/>
    <property type="evidence" value="ECO:0000314"/>
    <property type="project" value="UniProtKB"/>
</dbReference>
<dbReference type="GO" id="GO:0005739">
    <property type="term" value="C:mitochondrion"/>
    <property type="evidence" value="ECO:0000314"/>
    <property type="project" value="HPA"/>
</dbReference>
<dbReference type="GO" id="GO:0005654">
    <property type="term" value="C:nucleoplasm"/>
    <property type="evidence" value="ECO:0000318"/>
    <property type="project" value="GO_Central"/>
</dbReference>
<dbReference type="GO" id="GO:1990904">
    <property type="term" value="C:ribonucleoprotein complex"/>
    <property type="evidence" value="ECO:0000318"/>
    <property type="project" value="GO_Central"/>
</dbReference>
<dbReference type="GO" id="GO:0035770">
    <property type="term" value="C:ribonucleoprotein granule"/>
    <property type="evidence" value="ECO:0000314"/>
    <property type="project" value="UniProtKB"/>
</dbReference>
<dbReference type="GO" id="GO:0002151">
    <property type="term" value="F:G-quadruplex RNA binding"/>
    <property type="evidence" value="ECO:0000304"/>
    <property type="project" value="Reactome"/>
</dbReference>
<dbReference type="GO" id="GO:0003729">
    <property type="term" value="F:mRNA binding"/>
    <property type="evidence" value="ECO:0000314"/>
    <property type="project" value="UniProtKB"/>
</dbReference>
<dbReference type="GO" id="GO:0003723">
    <property type="term" value="F:RNA binding"/>
    <property type="evidence" value="ECO:0000314"/>
    <property type="project" value="UniProtKB"/>
</dbReference>
<dbReference type="GO" id="GO:0009952">
    <property type="term" value="P:anterior/posterior pattern specification"/>
    <property type="evidence" value="ECO:0007669"/>
    <property type="project" value="Ensembl"/>
</dbReference>
<dbReference type="GO" id="GO:0000957">
    <property type="term" value="P:mitochondrial RNA catabolic process"/>
    <property type="evidence" value="ECO:0000304"/>
    <property type="project" value="Reactome"/>
</dbReference>
<dbReference type="GO" id="GO:0016331">
    <property type="term" value="P:morphogenesis of embryonic epithelium"/>
    <property type="evidence" value="ECO:0007669"/>
    <property type="project" value="Ensembl"/>
</dbReference>
<dbReference type="GO" id="GO:0006397">
    <property type="term" value="P:mRNA processing"/>
    <property type="evidence" value="ECO:0007669"/>
    <property type="project" value="UniProtKB-KW"/>
</dbReference>
<dbReference type="GO" id="GO:0000962">
    <property type="term" value="P:positive regulation of mitochondrial RNA catabolic process"/>
    <property type="evidence" value="ECO:0000314"/>
    <property type="project" value="UniProtKB"/>
</dbReference>
<dbReference type="GO" id="GO:0043484">
    <property type="term" value="P:regulation of RNA splicing"/>
    <property type="evidence" value="ECO:0000318"/>
    <property type="project" value="GO_Central"/>
</dbReference>
<dbReference type="GO" id="GO:0008033">
    <property type="term" value="P:tRNA processing"/>
    <property type="evidence" value="ECO:0007669"/>
    <property type="project" value="UniProtKB-KW"/>
</dbReference>
<dbReference type="CDD" id="cd12730">
    <property type="entry name" value="RRM1_GRSF1"/>
    <property type="match status" value="1"/>
</dbReference>
<dbReference type="CDD" id="cd12505">
    <property type="entry name" value="RRM2_GRSF1"/>
    <property type="match status" value="1"/>
</dbReference>
<dbReference type="CDD" id="cd12733">
    <property type="entry name" value="RRM3_GRSF1"/>
    <property type="match status" value="1"/>
</dbReference>
<dbReference type="FunFam" id="3.30.70.330:FF:000279">
    <property type="entry name" value="G-rich RNA sequence binding factor 1"/>
    <property type="match status" value="1"/>
</dbReference>
<dbReference type="FunFam" id="3.30.70.330:FF:000071">
    <property type="entry name" value="heterogeneous nuclear ribonucleoprotein H isoform X1"/>
    <property type="match status" value="1"/>
</dbReference>
<dbReference type="FunFam" id="3.30.70.330:FF:000131">
    <property type="entry name" value="Heterogeneous nuclear ribonucleoprotein h3 isoform"/>
    <property type="match status" value="1"/>
</dbReference>
<dbReference type="Gene3D" id="3.30.70.330">
    <property type="match status" value="3"/>
</dbReference>
<dbReference type="InterPro" id="IPR050666">
    <property type="entry name" value="ESRP"/>
</dbReference>
<dbReference type="InterPro" id="IPR034424">
    <property type="entry name" value="GRSF-1_RRM2"/>
</dbReference>
<dbReference type="InterPro" id="IPR034425">
    <property type="entry name" value="GRSF1_RRM1"/>
</dbReference>
<dbReference type="InterPro" id="IPR034426">
    <property type="entry name" value="GRSF1_RRM3"/>
</dbReference>
<dbReference type="InterPro" id="IPR012677">
    <property type="entry name" value="Nucleotide-bd_a/b_plait_sf"/>
</dbReference>
<dbReference type="InterPro" id="IPR035979">
    <property type="entry name" value="RBD_domain_sf"/>
</dbReference>
<dbReference type="InterPro" id="IPR000504">
    <property type="entry name" value="RRM_dom"/>
</dbReference>
<dbReference type="PANTHER" id="PTHR13976">
    <property type="entry name" value="HETEROGENEOUS NUCLEAR RIBONUCLEOPROTEIN-RELATED"/>
    <property type="match status" value="1"/>
</dbReference>
<dbReference type="Pfam" id="PF00076">
    <property type="entry name" value="RRM_1"/>
    <property type="match status" value="1"/>
</dbReference>
<dbReference type="SMART" id="SM00360">
    <property type="entry name" value="RRM"/>
    <property type="match status" value="3"/>
</dbReference>
<dbReference type="SUPFAM" id="SSF54928">
    <property type="entry name" value="RNA-binding domain, RBD"/>
    <property type="match status" value="2"/>
</dbReference>
<dbReference type="PROSITE" id="PS50102">
    <property type="entry name" value="RRM"/>
    <property type="match status" value="3"/>
</dbReference>